<dbReference type="EC" id="1.4.4.2" evidence="1"/>
<dbReference type="EMBL" id="AM933172">
    <property type="protein sequence ID" value="CAR34474.1"/>
    <property type="molecule type" value="Genomic_DNA"/>
</dbReference>
<dbReference type="RefSeq" id="WP_000194966.1">
    <property type="nucleotide sequence ID" value="NC_011294.1"/>
</dbReference>
<dbReference type="SMR" id="B5QXI0"/>
<dbReference type="KEGG" id="set:SEN2896"/>
<dbReference type="HOGENOM" id="CLU_004620_3_2_6"/>
<dbReference type="Proteomes" id="UP000000613">
    <property type="component" value="Chromosome"/>
</dbReference>
<dbReference type="GO" id="GO:0005829">
    <property type="term" value="C:cytosol"/>
    <property type="evidence" value="ECO:0007669"/>
    <property type="project" value="TreeGrafter"/>
</dbReference>
<dbReference type="GO" id="GO:0005960">
    <property type="term" value="C:glycine cleavage complex"/>
    <property type="evidence" value="ECO:0007669"/>
    <property type="project" value="TreeGrafter"/>
</dbReference>
<dbReference type="GO" id="GO:0016594">
    <property type="term" value="F:glycine binding"/>
    <property type="evidence" value="ECO:0007669"/>
    <property type="project" value="TreeGrafter"/>
</dbReference>
<dbReference type="GO" id="GO:0004375">
    <property type="term" value="F:glycine dehydrogenase (decarboxylating) activity"/>
    <property type="evidence" value="ECO:0007669"/>
    <property type="project" value="UniProtKB-EC"/>
</dbReference>
<dbReference type="GO" id="GO:0030170">
    <property type="term" value="F:pyridoxal phosphate binding"/>
    <property type="evidence" value="ECO:0007669"/>
    <property type="project" value="TreeGrafter"/>
</dbReference>
<dbReference type="GO" id="GO:0019464">
    <property type="term" value="P:glycine decarboxylation via glycine cleavage system"/>
    <property type="evidence" value="ECO:0007669"/>
    <property type="project" value="UniProtKB-UniRule"/>
</dbReference>
<dbReference type="CDD" id="cd00613">
    <property type="entry name" value="GDC-P"/>
    <property type="match status" value="2"/>
</dbReference>
<dbReference type="FunFam" id="3.40.640.10:FF:000005">
    <property type="entry name" value="Glycine dehydrogenase (decarboxylating), mitochondrial"/>
    <property type="match status" value="1"/>
</dbReference>
<dbReference type="FunFam" id="3.90.1150.10:FF:000007">
    <property type="entry name" value="Glycine dehydrogenase (decarboxylating), mitochondrial"/>
    <property type="match status" value="1"/>
</dbReference>
<dbReference type="FunFam" id="3.40.640.10:FF:000007">
    <property type="entry name" value="glycine dehydrogenase (Decarboxylating), mitochondrial"/>
    <property type="match status" value="1"/>
</dbReference>
<dbReference type="Gene3D" id="3.90.1150.10">
    <property type="entry name" value="Aspartate Aminotransferase, domain 1"/>
    <property type="match status" value="1"/>
</dbReference>
<dbReference type="Gene3D" id="3.40.640.10">
    <property type="entry name" value="Type I PLP-dependent aspartate aminotransferase-like (Major domain)"/>
    <property type="match status" value="2"/>
</dbReference>
<dbReference type="HAMAP" id="MF_00711">
    <property type="entry name" value="GcvP"/>
    <property type="match status" value="1"/>
</dbReference>
<dbReference type="InterPro" id="IPR003437">
    <property type="entry name" value="GcvP"/>
</dbReference>
<dbReference type="InterPro" id="IPR049316">
    <property type="entry name" value="GDC-P_C"/>
</dbReference>
<dbReference type="InterPro" id="IPR049315">
    <property type="entry name" value="GDC-P_N"/>
</dbReference>
<dbReference type="InterPro" id="IPR020581">
    <property type="entry name" value="GDC_P"/>
</dbReference>
<dbReference type="InterPro" id="IPR015424">
    <property type="entry name" value="PyrdxlP-dep_Trfase"/>
</dbReference>
<dbReference type="InterPro" id="IPR015421">
    <property type="entry name" value="PyrdxlP-dep_Trfase_major"/>
</dbReference>
<dbReference type="InterPro" id="IPR015422">
    <property type="entry name" value="PyrdxlP-dep_Trfase_small"/>
</dbReference>
<dbReference type="NCBIfam" id="TIGR00461">
    <property type="entry name" value="gcvP"/>
    <property type="match status" value="1"/>
</dbReference>
<dbReference type="NCBIfam" id="NF003346">
    <property type="entry name" value="PRK04366.1"/>
    <property type="match status" value="1"/>
</dbReference>
<dbReference type="PANTHER" id="PTHR11773:SF13">
    <property type="entry name" value="GLYCINE DEHYDROGENASE (DECARBOXYLATING)"/>
    <property type="match status" value="1"/>
</dbReference>
<dbReference type="PANTHER" id="PTHR11773">
    <property type="entry name" value="GLYCINE DEHYDROGENASE, DECARBOXYLATING"/>
    <property type="match status" value="1"/>
</dbReference>
<dbReference type="Pfam" id="PF21478">
    <property type="entry name" value="GcvP2_C"/>
    <property type="match status" value="1"/>
</dbReference>
<dbReference type="Pfam" id="PF02347">
    <property type="entry name" value="GDC-P"/>
    <property type="match status" value="2"/>
</dbReference>
<dbReference type="SUPFAM" id="SSF53383">
    <property type="entry name" value="PLP-dependent transferases"/>
    <property type="match status" value="2"/>
</dbReference>
<sequence>MTQTLSQLENRGAFIERHIGPDAAQQQEMLNAVGAESLNALTGQIVPKDIQLATPPQVGEAATEYAALAELKAIAGRNKRFTSYIGMGYTAVQLPPVILRNMLENPGWYTAYTPYQPEVSQGRLEALLNFQQVTLDLTGLDMASASLLDEATAAAEAMAMAKRVSKLKNANRFFVASDVHPQTLDVVRTRAETFGFDVIVDDAAKALDHQDVFGVLLQQVGSTGEIHDYSALISELKARKVIVSVAADFMALVLLTAPGKQGADIVFGSAQRFGVPMGYGGPHAAFFAAKDEFKRSMPGRIIGVSKDAAGNTALRMAMQTREQHIRREKANSNICTSQVLLANIASLYAVYHGPVGLKRIANRIHRLTDILAAGLQQKGLKLRHAHYFDTLCVEVADKAAVLARAEAAEINLRSDIHNAVGITLDETTTRENVAQLFNVLLGGSHGLNIETLDKDVALDSRSIQQSMLRDDAILTHPVFNRYHSETEMMRYMHSLERKDLALNQAMIPLGSCTMKLNAAAEMIPITWPEFAELHPFCPPEQAEGYHQMISQLSDWLVKLTGYDAVCMQPNSGAQGEYAGLLAIRHYHESRNEGHRDICLIPASAHGTNPASAHMAGMQVVVVACDKNGNIDLDDLRAKAEQHAANLSCIMVTYPSTHGVYEETIREVCEVVHQFGGQVYLDGANMNAQVGITSPGFIGADVSHLNLHKTFCIPHGGGGPGMGPIGVKAHLAPFVPGHSVVQIEGMLTRQGAVSAAPFGSASILPISWMYIRMMGAEGLKQASQVAILNANYIASRLKDAYPVLYTGRDGRVAHECILDIRPLKEETGISELDIAKRLIDYGFHAPTMSFPVAGTLMVEPTESEGKAELDRFIDAMLAIRAEIDQVKAGVWPLEDNPLVNAPHIQSELVAEWAHPYSREVAVFPAGVADKYWPTVKRLDDVYGDRNLFCSCVPISDYQ</sequence>
<proteinExistence type="inferred from homology"/>
<gene>
    <name evidence="1" type="primary">gcvP</name>
    <name type="ordered locus">SEN2896</name>
</gene>
<keyword id="KW-0560">Oxidoreductase</keyword>
<keyword id="KW-0663">Pyridoxal phosphate</keyword>
<evidence type="ECO:0000255" key="1">
    <source>
        <dbReference type="HAMAP-Rule" id="MF_00711"/>
    </source>
</evidence>
<reference key="1">
    <citation type="journal article" date="2008" name="Genome Res.">
        <title>Comparative genome analysis of Salmonella enteritidis PT4 and Salmonella gallinarum 287/91 provides insights into evolutionary and host adaptation pathways.</title>
        <authorList>
            <person name="Thomson N.R."/>
            <person name="Clayton D.J."/>
            <person name="Windhorst D."/>
            <person name="Vernikos G."/>
            <person name="Davidson S."/>
            <person name="Churcher C."/>
            <person name="Quail M.A."/>
            <person name="Stevens M."/>
            <person name="Jones M.A."/>
            <person name="Watson M."/>
            <person name="Barron A."/>
            <person name="Layton A."/>
            <person name="Pickard D."/>
            <person name="Kingsley R.A."/>
            <person name="Bignell A."/>
            <person name="Clark L."/>
            <person name="Harris B."/>
            <person name="Ormond D."/>
            <person name="Abdellah Z."/>
            <person name="Brooks K."/>
            <person name="Cherevach I."/>
            <person name="Chillingworth T."/>
            <person name="Woodward J."/>
            <person name="Norberczak H."/>
            <person name="Lord A."/>
            <person name="Arrowsmith C."/>
            <person name="Jagels K."/>
            <person name="Moule S."/>
            <person name="Mungall K."/>
            <person name="Saunders M."/>
            <person name="Whitehead S."/>
            <person name="Chabalgoity J.A."/>
            <person name="Maskell D."/>
            <person name="Humphreys T."/>
            <person name="Roberts M."/>
            <person name="Barrow P.A."/>
            <person name="Dougan G."/>
            <person name="Parkhill J."/>
        </authorList>
    </citation>
    <scope>NUCLEOTIDE SEQUENCE [LARGE SCALE GENOMIC DNA]</scope>
    <source>
        <strain>P125109</strain>
    </source>
</reference>
<comment type="function">
    <text evidence="1">The glycine cleavage system catalyzes the degradation of glycine. The P protein binds the alpha-amino group of glycine through its pyridoxal phosphate cofactor; CO(2) is released and the remaining methylamine moiety is then transferred to the lipoamide cofactor of the H protein.</text>
</comment>
<comment type="catalytic activity">
    <reaction evidence="1">
        <text>N(6)-[(R)-lipoyl]-L-lysyl-[glycine-cleavage complex H protein] + glycine + H(+) = N(6)-[(R)-S(8)-aminomethyldihydrolipoyl]-L-lysyl-[glycine-cleavage complex H protein] + CO2</text>
        <dbReference type="Rhea" id="RHEA:24304"/>
        <dbReference type="Rhea" id="RHEA-COMP:10494"/>
        <dbReference type="Rhea" id="RHEA-COMP:10495"/>
        <dbReference type="ChEBI" id="CHEBI:15378"/>
        <dbReference type="ChEBI" id="CHEBI:16526"/>
        <dbReference type="ChEBI" id="CHEBI:57305"/>
        <dbReference type="ChEBI" id="CHEBI:83099"/>
        <dbReference type="ChEBI" id="CHEBI:83143"/>
        <dbReference type="EC" id="1.4.4.2"/>
    </reaction>
</comment>
<comment type="cofactor">
    <cofactor evidence="1">
        <name>pyridoxal 5'-phosphate</name>
        <dbReference type="ChEBI" id="CHEBI:597326"/>
    </cofactor>
</comment>
<comment type="subunit">
    <text evidence="1">The glycine cleavage system is composed of four proteins: P, T, L and H.</text>
</comment>
<comment type="similarity">
    <text evidence="1">Belongs to the GcvP family.</text>
</comment>
<organism>
    <name type="scientific">Salmonella enteritidis PT4 (strain P125109)</name>
    <dbReference type="NCBI Taxonomy" id="550537"/>
    <lineage>
        <taxon>Bacteria</taxon>
        <taxon>Pseudomonadati</taxon>
        <taxon>Pseudomonadota</taxon>
        <taxon>Gammaproteobacteria</taxon>
        <taxon>Enterobacterales</taxon>
        <taxon>Enterobacteriaceae</taxon>
        <taxon>Salmonella</taxon>
    </lineage>
</organism>
<feature type="chain" id="PRO_1000132452" description="Glycine dehydrogenase (decarboxylating)">
    <location>
        <begin position="1"/>
        <end position="957"/>
    </location>
</feature>
<feature type="modified residue" description="N6-(pyridoxal phosphate)lysine" evidence="1">
    <location>
        <position position="708"/>
    </location>
</feature>
<accession>B5QXI0</accession>
<protein>
    <recommendedName>
        <fullName evidence="1">Glycine dehydrogenase (decarboxylating)</fullName>
        <ecNumber evidence="1">1.4.4.2</ecNumber>
    </recommendedName>
    <alternativeName>
        <fullName evidence="1">Glycine cleavage system P-protein</fullName>
    </alternativeName>
    <alternativeName>
        <fullName evidence="1">Glycine decarboxylase</fullName>
    </alternativeName>
    <alternativeName>
        <fullName evidence="1">Glycine dehydrogenase (aminomethyl-transferring)</fullName>
    </alternativeName>
</protein>
<name>GCSP_SALEP</name>